<feature type="chain" id="PRO_0000287954" description="Energy-coupling factor transporter ATP-binding protein EcfA1">
    <location>
        <begin position="1"/>
        <end position="280"/>
    </location>
</feature>
<feature type="domain" description="ABC transporter" evidence="1">
    <location>
        <begin position="7"/>
        <end position="241"/>
    </location>
</feature>
<feature type="binding site" evidence="1">
    <location>
        <begin position="41"/>
        <end position="48"/>
    </location>
    <ligand>
        <name>ATP</name>
        <dbReference type="ChEBI" id="CHEBI:30616"/>
    </ligand>
</feature>
<reference key="1">
    <citation type="journal article" date="2005" name="Nat. Biotechnol.">
        <title>The complete genome sequence of the meat-borne lactic acid bacterium Lactobacillus sakei 23K.</title>
        <authorList>
            <person name="Chaillou S."/>
            <person name="Champomier-Verges M.-C."/>
            <person name="Cornet M."/>
            <person name="Crutz-Le Coq A.-M."/>
            <person name="Dudez A.-M."/>
            <person name="Martin V."/>
            <person name="Beaufils S."/>
            <person name="Darbon-Rongere E."/>
            <person name="Bossy R."/>
            <person name="Loux V."/>
            <person name="Zagorec M."/>
        </authorList>
    </citation>
    <scope>NUCLEOTIDE SEQUENCE [LARGE SCALE GENOMIC DNA]</scope>
    <source>
        <strain>23K</strain>
    </source>
</reference>
<accession>Q38UT9</accession>
<organism>
    <name type="scientific">Latilactobacillus sakei subsp. sakei (strain 23K)</name>
    <name type="common">Lactobacillus sakei subsp. sakei</name>
    <dbReference type="NCBI Taxonomy" id="314315"/>
    <lineage>
        <taxon>Bacteria</taxon>
        <taxon>Bacillati</taxon>
        <taxon>Bacillota</taxon>
        <taxon>Bacilli</taxon>
        <taxon>Lactobacillales</taxon>
        <taxon>Lactobacillaceae</taxon>
        <taxon>Latilactobacillus</taxon>
    </lineage>
</organism>
<comment type="function">
    <text evidence="1">ATP-binding (A) component of a common energy-coupling factor (ECF) ABC-transporter complex. Unlike classic ABC transporters this ECF transporter provides the energy necessary to transport a number of different substrates.</text>
</comment>
<comment type="subunit">
    <text evidence="1">Forms a stable energy-coupling factor (ECF) transporter complex composed of 2 membrane-embedded substrate-binding proteins (S component), 2 ATP-binding proteins (A component) and 2 transmembrane proteins (T component).</text>
</comment>
<comment type="subcellular location">
    <subcellularLocation>
        <location evidence="1">Cell membrane</location>
        <topology evidence="1">Peripheral membrane protein</topology>
    </subcellularLocation>
</comment>
<comment type="similarity">
    <text evidence="1">Belongs to the ABC transporter superfamily. Energy-coupling factor EcfA family.</text>
</comment>
<name>ECFA1_LATSS</name>
<protein>
    <recommendedName>
        <fullName evidence="1">Energy-coupling factor transporter ATP-binding protein EcfA1</fullName>
        <shortName evidence="1">ECF transporter A component EcfA1</shortName>
        <ecNumber evidence="1">7.-.-.-</ecNumber>
    </recommendedName>
</protein>
<sequence>MDENKIIEVAHLKYEYPQASRLALNDLSVSINAGEWVAIIGHNGSGKSTFAKSLNGLLDLQSGDITIDGLPLSIETVWDIRRKIGMVFQNPDNQFVGATVEDDVAFGLENQGIERTEMQRRVQDAVDRVGMTQFMTREPSRLSGGQKQRVALAGIIAQQPEILILDEATSMLDPKGRQEVLETIHTLKQETNMTVLSITHDIDEAASADRIVMLDKGQVIDQGTPAEIFAYGQRLLDLGLDVPYPEKLKAALTKLGVPMPVDYLTTERMVDHLWTLHSKM</sequence>
<proteinExistence type="inferred from homology"/>
<keyword id="KW-0067">ATP-binding</keyword>
<keyword id="KW-1003">Cell membrane</keyword>
<keyword id="KW-0472">Membrane</keyword>
<keyword id="KW-0547">Nucleotide-binding</keyword>
<keyword id="KW-1185">Reference proteome</keyword>
<keyword id="KW-1278">Translocase</keyword>
<keyword id="KW-0813">Transport</keyword>
<dbReference type="EC" id="7.-.-.-" evidence="1"/>
<dbReference type="EMBL" id="CR936503">
    <property type="protein sequence ID" value="CAI56045.1"/>
    <property type="molecule type" value="Genomic_DNA"/>
</dbReference>
<dbReference type="RefSeq" id="WP_011375428.1">
    <property type="nucleotide sequence ID" value="NC_007576.1"/>
</dbReference>
<dbReference type="SMR" id="Q38UT9"/>
<dbReference type="STRING" id="314315.LCA_1737"/>
<dbReference type="KEGG" id="lsa:LCA_1737"/>
<dbReference type="eggNOG" id="COG1122">
    <property type="taxonomic scope" value="Bacteria"/>
</dbReference>
<dbReference type="HOGENOM" id="CLU_000604_1_22_9"/>
<dbReference type="OrthoDB" id="9784332at2"/>
<dbReference type="Proteomes" id="UP000002707">
    <property type="component" value="Chromosome"/>
</dbReference>
<dbReference type="GO" id="GO:0043190">
    <property type="term" value="C:ATP-binding cassette (ABC) transporter complex"/>
    <property type="evidence" value="ECO:0007669"/>
    <property type="project" value="TreeGrafter"/>
</dbReference>
<dbReference type="GO" id="GO:0005524">
    <property type="term" value="F:ATP binding"/>
    <property type="evidence" value="ECO:0007669"/>
    <property type="project" value="UniProtKB-KW"/>
</dbReference>
<dbReference type="GO" id="GO:0016887">
    <property type="term" value="F:ATP hydrolysis activity"/>
    <property type="evidence" value="ECO:0007669"/>
    <property type="project" value="InterPro"/>
</dbReference>
<dbReference type="GO" id="GO:0042626">
    <property type="term" value="F:ATPase-coupled transmembrane transporter activity"/>
    <property type="evidence" value="ECO:0007669"/>
    <property type="project" value="TreeGrafter"/>
</dbReference>
<dbReference type="CDD" id="cd03225">
    <property type="entry name" value="ABC_cobalt_CbiO_domain1"/>
    <property type="match status" value="1"/>
</dbReference>
<dbReference type="FunFam" id="3.40.50.300:FF:000224">
    <property type="entry name" value="Energy-coupling factor transporter ATP-binding protein EcfA"/>
    <property type="match status" value="1"/>
</dbReference>
<dbReference type="Gene3D" id="3.40.50.300">
    <property type="entry name" value="P-loop containing nucleotide triphosphate hydrolases"/>
    <property type="match status" value="1"/>
</dbReference>
<dbReference type="InterPro" id="IPR003593">
    <property type="entry name" value="AAA+_ATPase"/>
</dbReference>
<dbReference type="InterPro" id="IPR003439">
    <property type="entry name" value="ABC_transporter-like_ATP-bd"/>
</dbReference>
<dbReference type="InterPro" id="IPR017871">
    <property type="entry name" value="ABC_transporter-like_CS"/>
</dbReference>
<dbReference type="InterPro" id="IPR015856">
    <property type="entry name" value="ABC_transpr_CbiO/EcfA_su"/>
</dbReference>
<dbReference type="InterPro" id="IPR050095">
    <property type="entry name" value="ECF_ABC_transporter_ATP-bd"/>
</dbReference>
<dbReference type="InterPro" id="IPR030947">
    <property type="entry name" value="EcfA_1"/>
</dbReference>
<dbReference type="InterPro" id="IPR027417">
    <property type="entry name" value="P-loop_NTPase"/>
</dbReference>
<dbReference type="NCBIfam" id="TIGR04520">
    <property type="entry name" value="ECF_ATPase_1"/>
    <property type="match status" value="1"/>
</dbReference>
<dbReference type="NCBIfam" id="NF010156">
    <property type="entry name" value="PRK13635.1"/>
    <property type="match status" value="1"/>
</dbReference>
<dbReference type="NCBIfam" id="NF010167">
    <property type="entry name" value="PRK13648.1"/>
    <property type="match status" value="1"/>
</dbReference>
<dbReference type="PANTHER" id="PTHR43553:SF24">
    <property type="entry name" value="ENERGY-COUPLING FACTOR TRANSPORTER ATP-BINDING PROTEIN ECFA1"/>
    <property type="match status" value="1"/>
</dbReference>
<dbReference type="PANTHER" id="PTHR43553">
    <property type="entry name" value="HEAVY METAL TRANSPORTER"/>
    <property type="match status" value="1"/>
</dbReference>
<dbReference type="Pfam" id="PF00005">
    <property type="entry name" value="ABC_tran"/>
    <property type="match status" value="1"/>
</dbReference>
<dbReference type="SMART" id="SM00382">
    <property type="entry name" value="AAA"/>
    <property type="match status" value="1"/>
</dbReference>
<dbReference type="SUPFAM" id="SSF52540">
    <property type="entry name" value="P-loop containing nucleoside triphosphate hydrolases"/>
    <property type="match status" value="1"/>
</dbReference>
<dbReference type="PROSITE" id="PS00211">
    <property type="entry name" value="ABC_TRANSPORTER_1"/>
    <property type="match status" value="1"/>
</dbReference>
<dbReference type="PROSITE" id="PS50893">
    <property type="entry name" value="ABC_TRANSPORTER_2"/>
    <property type="match status" value="1"/>
</dbReference>
<dbReference type="PROSITE" id="PS51246">
    <property type="entry name" value="CBIO"/>
    <property type="match status" value="1"/>
</dbReference>
<gene>
    <name evidence="1" type="primary">ecfA1</name>
    <name type="synonym">cbiO1</name>
    <name type="ordered locus">LCA_1737</name>
</gene>
<evidence type="ECO:0000255" key="1">
    <source>
        <dbReference type="HAMAP-Rule" id="MF_01710"/>
    </source>
</evidence>